<gene>
    <name evidence="1" type="primary">argS</name>
    <name type="ordered locus">BAV3361</name>
</gene>
<accession>Q2KTN9</accession>
<evidence type="ECO:0000255" key="1">
    <source>
        <dbReference type="HAMAP-Rule" id="MF_00123"/>
    </source>
</evidence>
<proteinExistence type="inferred from homology"/>
<sequence length="561" mass="61604">MLPEQQQHLISLLARAVAGILPEASPDILLERPKVAAHGDVATNVAMQLAKPAKRNPRELAQGIVDALLADPQARAIVDSAEIAGPGFINLRFTAQARQAVVAAVSAQGAAFGRAARRDEKVLVEFVSANPTGPLHVGHARQAALGDAICRLFDASGWDVTREFYYNDAGNQIQNLAISVQARARGIGPDAPEWPADGYKGDYIADIARDYLAQASVQAADGEPVQASGNIDDLEDIRAFAVAYLRREQDLDLQAFGLKFDNFFLESSLYTSGRVERTVETLIAKGHTYEQDGALWLRTTELGTGDDKDRVMRKSEGGYTYFVPDVAYHLAKWERGFHHAINIQGSDHHGTVARVRAGLQGLEEGIPKEFPAYVLHKMVKVMRGGEEVKISKRAGSYVTMRDLIEWVGRDAVRYFLIQRRADTEFVFDIDLALSKSDENPVYYIQYAHARICSMIASSGLDDATIAAADAARLTAPSEFALMQRLAEFPNVVKLAAQELAPHHIAFWLRDCASDFHGWYNAERVLVDDEGLKQARLRLAATTRQVLANGLALLGVTALERM</sequence>
<comment type="catalytic activity">
    <reaction evidence="1">
        <text>tRNA(Arg) + L-arginine + ATP = L-arginyl-tRNA(Arg) + AMP + diphosphate</text>
        <dbReference type="Rhea" id="RHEA:20301"/>
        <dbReference type="Rhea" id="RHEA-COMP:9658"/>
        <dbReference type="Rhea" id="RHEA-COMP:9673"/>
        <dbReference type="ChEBI" id="CHEBI:30616"/>
        <dbReference type="ChEBI" id="CHEBI:32682"/>
        <dbReference type="ChEBI" id="CHEBI:33019"/>
        <dbReference type="ChEBI" id="CHEBI:78442"/>
        <dbReference type="ChEBI" id="CHEBI:78513"/>
        <dbReference type="ChEBI" id="CHEBI:456215"/>
        <dbReference type="EC" id="6.1.1.19"/>
    </reaction>
</comment>
<comment type="subunit">
    <text evidence="1">Monomer.</text>
</comment>
<comment type="subcellular location">
    <subcellularLocation>
        <location evidence="1">Cytoplasm</location>
    </subcellularLocation>
</comment>
<comment type="similarity">
    <text evidence="1">Belongs to the class-I aminoacyl-tRNA synthetase family.</text>
</comment>
<name>SYR_BORA1</name>
<organism>
    <name type="scientific">Bordetella avium (strain 197N)</name>
    <dbReference type="NCBI Taxonomy" id="360910"/>
    <lineage>
        <taxon>Bacteria</taxon>
        <taxon>Pseudomonadati</taxon>
        <taxon>Pseudomonadota</taxon>
        <taxon>Betaproteobacteria</taxon>
        <taxon>Burkholderiales</taxon>
        <taxon>Alcaligenaceae</taxon>
        <taxon>Bordetella</taxon>
    </lineage>
</organism>
<reference key="1">
    <citation type="journal article" date="2006" name="J. Bacteriol.">
        <title>Comparison of the genome sequence of the poultry pathogen Bordetella avium with those of B. bronchiseptica, B. pertussis, and B. parapertussis reveals extensive diversity in surface structures associated with host interaction.</title>
        <authorList>
            <person name="Sebaihia M."/>
            <person name="Preston A."/>
            <person name="Maskell D.J."/>
            <person name="Kuzmiak H."/>
            <person name="Connell T.D."/>
            <person name="King N.D."/>
            <person name="Orndorff P.E."/>
            <person name="Miyamoto D.M."/>
            <person name="Thomson N.R."/>
            <person name="Harris D."/>
            <person name="Goble A."/>
            <person name="Lord A."/>
            <person name="Murphy L."/>
            <person name="Quail M.A."/>
            <person name="Rutter S."/>
            <person name="Squares R."/>
            <person name="Squares S."/>
            <person name="Woodward J."/>
            <person name="Parkhill J."/>
            <person name="Temple L.M."/>
        </authorList>
    </citation>
    <scope>NUCLEOTIDE SEQUENCE [LARGE SCALE GENOMIC DNA]</scope>
    <source>
        <strain>197N</strain>
    </source>
</reference>
<feature type="chain" id="PRO_0000241992" description="Arginine--tRNA ligase">
    <location>
        <begin position="1"/>
        <end position="561"/>
    </location>
</feature>
<feature type="short sequence motif" description="'HIGH' region">
    <location>
        <begin position="129"/>
        <end position="139"/>
    </location>
</feature>
<protein>
    <recommendedName>
        <fullName evidence="1">Arginine--tRNA ligase</fullName>
        <ecNumber evidence="1">6.1.1.19</ecNumber>
    </recommendedName>
    <alternativeName>
        <fullName evidence="1">Arginyl-tRNA synthetase</fullName>
        <shortName evidence="1">ArgRS</shortName>
    </alternativeName>
</protein>
<keyword id="KW-0030">Aminoacyl-tRNA synthetase</keyword>
<keyword id="KW-0067">ATP-binding</keyword>
<keyword id="KW-0963">Cytoplasm</keyword>
<keyword id="KW-0436">Ligase</keyword>
<keyword id="KW-0547">Nucleotide-binding</keyword>
<keyword id="KW-0648">Protein biosynthesis</keyword>
<keyword id="KW-1185">Reference proteome</keyword>
<dbReference type="EC" id="6.1.1.19" evidence="1"/>
<dbReference type="EMBL" id="AM167904">
    <property type="protein sequence ID" value="CAJ50971.1"/>
    <property type="molecule type" value="Genomic_DNA"/>
</dbReference>
<dbReference type="RefSeq" id="WP_012418998.1">
    <property type="nucleotide sequence ID" value="NC_010645.1"/>
</dbReference>
<dbReference type="SMR" id="Q2KTN9"/>
<dbReference type="STRING" id="360910.BAV3361"/>
<dbReference type="GeneID" id="92933378"/>
<dbReference type="KEGG" id="bav:BAV3361"/>
<dbReference type="eggNOG" id="COG0018">
    <property type="taxonomic scope" value="Bacteria"/>
</dbReference>
<dbReference type="HOGENOM" id="CLU_006406_0_1_4"/>
<dbReference type="OrthoDB" id="9803211at2"/>
<dbReference type="Proteomes" id="UP000001977">
    <property type="component" value="Chromosome"/>
</dbReference>
<dbReference type="GO" id="GO:0005737">
    <property type="term" value="C:cytoplasm"/>
    <property type="evidence" value="ECO:0007669"/>
    <property type="project" value="UniProtKB-SubCell"/>
</dbReference>
<dbReference type="GO" id="GO:0004814">
    <property type="term" value="F:arginine-tRNA ligase activity"/>
    <property type="evidence" value="ECO:0007669"/>
    <property type="project" value="UniProtKB-UniRule"/>
</dbReference>
<dbReference type="GO" id="GO:0005524">
    <property type="term" value="F:ATP binding"/>
    <property type="evidence" value="ECO:0007669"/>
    <property type="project" value="UniProtKB-UniRule"/>
</dbReference>
<dbReference type="GO" id="GO:0006420">
    <property type="term" value="P:arginyl-tRNA aminoacylation"/>
    <property type="evidence" value="ECO:0007669"/>
    <property type="project" value="UniProtKB-UniRule"/>
</dbReference>
<dbReference type="CDD" id="cd07956">
    <property type="entry name" value="Anticodon_Ia_Arg"/>
    <property type="match status" value="1"/>
</dbReference>
<dbReference type="CDD" id="cd00671">
    <property type="entry name" value="ArgRS_core"/>
    <property type="match status" value="1"/>
</dbReference>
<dbReference type="FunFam" id="1.10.730.10:FF:000008">
    <property type="entry name" value="Arginine--tRNA ligase"/>
    <property type="match status" value="1"/>
</dbReference>
<dbReference type="FunFam" id="3.40.50.620:FF:000062">
    <property type="entry name" value="Arginine--tRNA ligase"/>
    <property type="match status" value="1"/>
</dbReference>
<dbReference type="Gene3D" id="3.30.1360.70">
    <property type="entry name" value="Arginyl tRNA synthetase N-terminal domain"/>
    <property type="match status" value="1"/>
</dbReference>
<dbReference type="Gene3D" id="3.40.50.620">
    <property type="entry name" value="HUPs"/>
    <property type="match status" value="1"/>
</dbReference>
<dbReference type="Gene3D" id="1.10.730.10">
    <property type="entry name" value="Isoleucyl-tRNA Synthetase, Domain 1"/>
    <property type="match status" value="1"/>
</dbReference>
<dbReference type="HAMAP" id="MF_00123">
    <property type="entry name" value="Arg_tRNA_synth"/>
    <property type="match status" value="1"/>
</dbReference>
<dbReference type="InterPro" id="IPR001412">
    <property type="entry name" value="aa-tRNA-synth_I_CS"/>
</dbReference>
<dbReference type="InterPro" id="IPR001278">
    <property type="entry name" value="Arg-tRNA-ligase"/>
</dbReference>
<dbReference type="InterPro" id="IPR005148">
    <property type="entry name" value="Arg-tRNA-synth_N"/>
</dbReference>
<dbReference type="InterPro" id="IPR036695">
    <property type="entry name" value="Arg-tRNA-synth_N_sf"/>
</dbReference>
<dbReference type="InterPro" id="IPR035684">
    <property type="entry name" value="ArgRS_core"/>
</dbReference>
<dbReference type="InterPro" id="IPR008909">
    <property type="entry name" value="DALR_anticod-bd"/>
</dbReference>
<dbReference type="InterPro" id="IPR014729">
    <property type="entry name" value="Rossmann-like_a/b/a_fold"/>
</dbReference>
<dbReference type="InterPro" id="IPR009080">
    <property type="entry name" value="tRNAsynth_Ia_anticodon-bd"/>
</dbReference>
<dbReference type="NCBIfam" id="TIGR00456">
    <property type="entry name" value="argS"/>
    <property type="match status" value="1"/>
</dbReference>
<dbReference type="PANTHER" id="PTHR11956:SF5">
    <property type="entry name" value="ARGININE--TRNA LIGASE, CYTOPLASMIC"/>
    <property type="match status" value="1"/>
</dbReference>
<dbReference type="PANTHER" id="PTHR11956">
    <property type="entry name" value="ARGINYL-TRNA SYNTHETASE"/>
    <property type="match status" value="1"/>
</dbReference>
<dbReference type="Pfam" id="PF03485">
    <property type="entry name" value="Arg_tRNA_synt_N"/>
    <property type="match status" value="1"/>
</dbReference>
<dbReference type="Pfam" id="PF05746">
    <property type="entry name" value="DALR_1"/>
    <property type="match status" value="1"/>
</dbReference>
<dbReference type="Pfam" id="PF00750">
    <property type="entry name" value="tRNA-synt_1d"/>
    <property type="match status" value="1"/>
</dbReference>
<dbReference type="PRINTS" id="PR01038">
    <property type="entry name" value="TRNASYNTHARG"/>
</dbReference>
<dbReference type="SMART" id="SM01016">
    <property type="entry name" value="Arg_tRNA_synt_N"/>
    <property type="match status" value="1"/>
</dbReference>
<dbReference type="SMART" id="SM00836">
    <property type="entry name" value="DALR_1"/>
    <property type="match status" value="1"/>
</dbReference>
<dbReference type="SUPFAM" id="SSF47323">
    <property type="entry name" value="Anticodon-binding domain of a subclass of class I aminoacyl-tRNA synthetases"/>
    <property type="match status" value="1"/>
</dbReference>
<dbReference type="SUPFAM" id="SSF55190">
    <property type="entry name" value="Arginyl-tRNA synthetase (ArgRS), N-terminal 'additional' domain"/>
    <property type="match status" value="1"/>
</dbReference>
<dbReference type="SUPFAM" id="SSF52374">
    <property type="entry name" value="Nucleotidylyl transferase"/>
    <property type="match status" value="1"/>
</dbReference>
<dbReference type="PROSITE" id="PS00178">
    <property type="entry name" value="AA_TRNA_LIGASE_I"/>
    <property type="match status" value="1"/>
</dbReference>